<comment type="function">
    <text evidence="1">Catalyzes oxygen-dependent 5-hydroxyuridine (ho5U) modification at position 34 in tRNAs.</text>
</comment>
<comment type="catalytic activity">
    <reaction evidence="1">
        <text>uridine(34) in tRNA + AH2 + O2 = 5-hydroxyuridine(34) in tRNA + A + H2O</text>
        <dbReference type="Rhea" id="RHEA:64224"/>
        <dbReference type="Rhea" id="RHEA-COMP:11727"/>
        <dbReference type="Rhea" id="RHEA-COMP:13381"/>
        <dbReference type="ChEBI" id="CHEBI:13193"/>
        <dbReference type="ChEBI" id="CHEBI:15377"/>
        <dbReference type="ChEBI" id="CHEBI:15379"/>
        <dbReference type="ChEBI" id="CHEBI:17499"/>
        <dbReference type="ChEBI" id="CHEBI:65315"/>
        <dbReference type="ChEBI" id="CHEBI:136877"/>
    </reaction>
</comment>
<comment type="similarity">
    <text evidence="1">Belongs to the TrhO family.</text>
</comment>
<name>TRHO_LACLM</name>
<reference key="1">
    <citation type="journal article" date="2007" name="J. Bacteriol.">
        <title>The complete genome sequence of the lactic acid bacterial paradigm Lactococcus lactis subsp. cremoris MG1363.</title>
        <authorList>
            <person name="Wegmann U."/>
            <person name="O'Connell-Motherway M."/>
            <person name="Zomer A."/>
            <person name="Buist G."/>
            <person name="Shearman C."/>
            <person name="Canchaya C."/>
            <person name="Ventura M."/>
            <person name="Goesmann A."/>
            <person name="Gasson M.J."/>
            <person name="Kuipers O.P."/>
            <person name="van Sinderen D."/>
            <person name="Kok J."/>
        </authorList>
    </citation>
    <scope>NUCLEOTIDE SEQUENCE [LARGE SCALE GENOMIC DNA]</scope>
    <source>
        <strain>MG1363</strain>
    </source>
</reference>
<gene>
    <name evidence="1" type="primary">trhO</name>
    <name type="ordered locus">llmg_1287</name>
</gene>
<organism>
    <name type="scientific">Lactococcus lactis subsp. cremoris (strain MG1363)</name>
    <dbReference type="NCBI Taxonomy" id="416870"/>
    <lineage>
        <taxon>Bacteria</taxon>
        <taxon>Bacillati</taxon>
        <taxon>Bacillota</taxon>
        <taxon>Bacilli</taxon>
        <taxon>Lactobacillales</taxon>
        <taxon>Streptococcaceae</taxon>
        <taxon>Lactococcus</taxon>
        <taxon>Lactococcus cremoris subsp. cremoris</taxon>
    </lineage>
</organism>
<accession>A2RKR4</accession>
<keyword id="KW-0560">Oxidoreductase</keyword>
<keyword id="KW-0819">tRNA processing</keyword>
<proteinExistence type="inferred from homology"/>
<protein>
    <recommendedName>
        <fullName evidence="1">tRNA uridine(34) hydroxylase</fullName>
        <ecNumber evidence="1">1.14.-.-</ecNumber>
    </recommendedName>
    <alternativeName>
        <fullName evidence="1">tRNA hydroxylation protein O</fullName>
    </alternativeName>
</protein>
<dbReference type="EC" id="1.14.-.-" evidence="1"/>
<dbReference type="EMBL" id="AM406671">
    <property type="protein sequence ID" value="CAL97880.1"/>
    <property type="molecule type" value="Genomic_DNA"/>
</dbReference>
<dbReference type="RefSeq" id="WP_011835164.1">
    <property type="nucleotide sequence ID" value="NC_009004.1"/>
</dbReference>
<dbReference type="SMR" id="A2RKR4"/>
<dbReference type="STRING" id="416870.llmg_1287"/>
<dbReference type="GeneID" id="61109474"/>
<dbReference type="KEGG" id="llm:llmg_1287"/>
<dbReference type="eggNOG" id="COG1054">
    <property type="taxonomic scope" value="Bacteria"/>
</dbReference>
<dbReference type="HOGENOM" id="CLU_038878_1_0_9"/>
<dbReference type="OrthoDB" id="9778326at2"/>
<dbReference type="PhylomeDB" id="A2RKR4"/>
<dbReference type="Proteomes" id="UP000000364">
    <property type="component" value="Chromosome"/>
</dbReference>
<dbReference type="GO" id="GO:0016705">
    <property type="term" value="F:oxidoreductase activity, acting on paired donors, with incorporation or reduction of molecular oxygen"/>
    <property type="evidence" value="ECO:0007669"/>
    <property type="project" value="UniProtKB-UniRule"/>
</dbReference>
<dbReference type="GO" id="GO:0006400">
    <property type="term" value="P:tRNA modification"/>
    <property type="evidence" value="ECO:0007669"/>
    <property type="project" value="UniProtKB-UniRule"/>
</dbReference>
<dbReference type="CDD" id="cd01518">
    <property type="entry name" value="RHOD_YceA"/>
    <property type="match status" value="1"/>
</dbReference>
<dbReference type="Gene3D" id="3.30.70.100">
    <property type="match status" value="1"/>
</dbReference>
<dbReference type="Gene3D" id="3.40.250.10">
    <property type="entry name" value="Rhodanese-like domain"/>
    <property type="match status" value="1"/>
</dbReference>
<dbReference type="HAMAP" id="MF_00469">
    <property type="entry name" value="TrhO"/>
    <property type="match status" value="1"/>
</dbReference>
<dbReference type="InterPro" id="IPR001763">
    <property type="entry name" value="Rhodanese-like_dom"/>
</dbReference>
<dbReference type="InterPro" id="IPR036873">
    <property type="entry name" value="Rhodanese-like_dom_sf"/>
</dbReference>
<dbReference type="InterPro" id="IPR022111">
    <property type="entry name" value="Rhodanese_C"/>
</dbReference>
<dbReference type="InterPro" id="IPR020936">
    <property type="entry name" value="TrhO"/>
</dbReference>
<dbReference type="InterPro" id="IPR040503">
    <property type="entry name" value="TRHO_N"/>
</dbReference>
<dbReference type="NCBIfam" id="NF001135">
    <property type="entry name" value="PRK00142.1-3"/>
    <property type="match status" value="1"/>
</dbReference>
<dbReference type="PANTHER" id="PTHR43268:SF3">
    <property type="entry name" value="RHODANESE-LIKE DOMAIN-CONTAINING PROTEIN 7-RELATED"/>
    <property type="match status" value="1"/>
</dbReference>
<dbReference type="PANTHER" id="PTHR43268">
    <property type="entry name" value="THIOSULFATE SULFURTRANSFERASE/RHODANESE-LIKE DOMAIN-CONTAINING PROTEIN 2"/>
    <property type="match status" value="1"/>
</dbReference>
<dbReference type="Pfam" id="PF00581">
    <property type="entry name" value="Rhodanese"/>
    <property type="match status" value="1"/>
</dbReference>
<dbReference type="Pfam" id="PF12368">
    <property type="entry name" value="Rhodanese_C"/>
    <property type="match status" value="1"/>
</dbReference>
<dbReference type="Pfam" id="PF17773">
    <property type="entry name" value="UPF0176_N"/>
    <property type="match status" value="1"/>
</dbReference>
<dbReference type="SMART" id="SM00450">
    <property type="entry name" value="RHOD"/>
    <property type="match status" value="1"/>
</dbReference>
<dbReference type="SUPFAM" id="SSF52821">
    <property type="entry name" value="Rhodanese/Cell cycle control phosphatase"/>
    <property type="match status" value="1"/>
</dbReference>
<dbReference type="PROSITE" id="PS50206">
    <property type="entry name" value="RHODANESE_3"/>
    <property type="match status" value="1"/>
</dbReference>
<feature type="chain" id="PRO_1000013744" description="tRNA uridine(34) hydroxylase">
    <location>
        <begin position="1"/>
        <end position="319"/>
    </location>
</feature>
<feature type="domain" description="Rhodanese" evidence="1">
    <location>
        <begin position="125"/>
        <end position="219"/>
    </location>
</feature>
<feature type="active site" description="Cysteine persulfide intermediate" evidence="1">
    <location>
        <position position="179"/>
    </location>
</feature>
<sequence length="319" mass="36740">MTQDYRVLLYYQYVPIEDGESFAQKHLSDCKALGLKGRILVADEGINGTVSGTVEQTNAYMSLMKNDSRFTSTIFKIDEAKQNAFKKMHVRYRPELVNLSLEDDVNPLELTGAYLDPKEFREAMLDENTVVIDARNDYEFDLGHFRGAIRPEIRSFRELPQWIRDNKEQFMEKRVLTYCTGGIRCEKFSGWLVREGFKDVGQLHGGIATYGKDPEVQGDLWDGQMYVFDSRIAVPINQKEHVIVGRDWFDGSPCERYINCGNPECNRQMLASKENEAKYLGACSHECRVHPDNRYIKAHQLSNQEVQERLALLEKDLAS</sequence>
<evidence type="ECO:0000255" key="1">
    <source>
        <dbReference type="HAMAP-Rule" id="MF_00469"/>
    </source>
</evidence>